<protein>
    <recommendedName>
        <fullName>Putative pterin-4-alpha-carbinolamine dehydratase</fullName>
        <shortName>PHS</shortName>
        <ecNumber>4.2.1.96</ecNumber>
    </recommendedName>
</protein>
<reference key="1">
    <citation type="journal article" date="1998" name="Nature">
        <title>Deciphering the biology of Mycobacterium tuberculosis from the complete genome sequence.</title>
        <authorList>
            <person name="Cole S.T."/>
            <person name="Brosch R."/>
            <person name="Parkhill J."/>
            <person name="Garnier T."/>
            <person name="Churcher C.M."/>
            <person name="Harris D.E."/>
            <person name="Gordon S.V."/>
            <person name="Eiglmeier K."/>
            <person name="Gas S."/>
            <person name="Barry C.E. III"/>
            <person name="Tekaia F."/>
            <person name="Badcock K."/>
            <person name="Basham D."/>
            <person name="Brown D."/>
            <person name="Chillingworth T."/>
            <person name="Connor R."/>
            <person name="Davies R.M."/>
            <person name="Devlin K."/>
            <person name="Feltwell T."/>
            <person name="Gentles S."/>
            <person name="Hamlin N."/>
            <person name="Holroyd S."/>
            <person name="Hornsby T."/>
            <person name="Jagels K."/>
            <person name="Krogh A."/>
            <person name="McLean J."/>
            <person name="Moule S."/>
            <person name="Murphy L.D."/>
            <person name="Oliver S."/>
            <person name="Osborne J."/>
            <person name="Quail M.A."/>
            <person name="Rajandream M.A."/>
            <person name="Rogers J."/>
            <person name="Rutter S."/>
            <person name="Seeger K."/>
            <person name="Skelton S."/>
            <person name="Squares S."/>
            <person name="Squares R."/>
            <person name="Sulston J.E."/>
            <person name="Taylor K."/>
            <person name="Whitehead S."/>
            <person name="Barrell B.G."/>
        </authorList>
    </citation>
    <scope>NUCLEOTIDE SEQUENCE [LARGE SCALE GENOMIC DNA]</scope>
    <source>
        <strain>ATCC 25618 / H37Rv</strain>
    </source>
</reference>
<reference key="2">
    <citation type="journal article" date="2002" name="Microbiology">
        <title>Re-annotation of the genome sequence of Mycobacterium tuberculosis H37Rv.</title>
        <authorList>
            <person name="Camus J.-C."/>
            <person name="Pryor M.J."/>
            <person name="Medigue C."/>
            <person name="Cole S.T."/>
        </authorList>
    </citation>
    <scope>IDENTIFICATION</scope>
    <source>
        <strain>ATCC 25618 / H37Rv</strain>
    </source>
</reference>
<reference key="3">
    <citation type="journal article" date="2011" name="Mol. Cell. Proteomics">
        <title>Proteogenomic analysis of Mycobacterium tuberculosis by high resolution mass spectrometry.</title>
        <authorList>
            <person name="Kelkar D.S."/>
            <person name="Kumar D."/>
            <person name="Kumar P."/>
            <person name="Balakrishnan L."/>
            <person name="Muthusamy B."/>
            <person name="Yadav A.K."/>
            <person name="Shrivastava P."/>
            <person name="Marimuthu A."/>
            <person name="Anand S."/>
            <person name="Sundaram H."/>
            <person name="Kingsbury R."/>
            <person name="Harsha H.C."/>
            <person name="Nair B."/>
            <person name="Prasad T.S."/>
            <person name="Chauhan D.S."/>
            <person name="Katoch K."/>
            <person name="Katoch V.M."/>
            <person name="Kumar P."/>
            <person name="Chaerkady R."/>
            <person name="Ramachandran S."/>
            <person name="Dash D."/>
            <person name="Pandey A."/>
        </authorList>
    </citation>
    <scope>ACETYLATION [LARGE SCALE ANALYSIS] AT ALA-2</scope>
    <scope>CLEAVAGE OF INITIATOR METHIONINE [LARGE SCALE ANALYSIS]</scope>
    <scope>IDENTIFICATION BY MASS SPECTROMETRY [LARGE SCALE ANALYSIS]</scope>
    <source>
        <strain>ATCC 25618 / H37Rv</strain>
    </source>
</reference>
<accession>P9WI93</accession>
<accession>L0T7H1</accession>
<accession>P0A5S2</accession>
<accession>P58241</accession>
<comment type="catalytic activity">
    <reaction>
        <text>(4aS,6R)-4a-hydroxy-L-erythro-5,6,7,8-tetrahydrobiopterin = (6R)-L-erythro-6,7-dihydrobiopterin + H2O</text>
        <dbReference type="Rhea" id="RHEA:11920"/>
        <dbReference type="ChEBI" id="CHEBI:15377"/>
        <dbReference type="ChEBI" id="CHEBI:15642"/>
        <dbReference type="ChEBI" id="CHEBI:43120"/>
        <dbReference type="EC" id="4.2.1.96"/>
    </reaction>
</comment>
<comment type="similarity">
    <text evidence="1">Belongs to the pterin-4-alpha-carbinolamine dehydratase family.</text>
</comment>
<proteinExistence type="evidence at protein level"/>
<dbReference type="EC" id="4.2.1.96"/>
<dbReference type="EMBL" id="AL123456">
    <property type="protein sequence ID" value="CCP43915.1"/>
    <property type="molecule type" value="Genomic_DNA"/>
</dbReference>
<dbReference type="RefSeq" id="WP_003406082.1">
    <property type="nucleotide sequence ID" value="NZ_NVQJ01000025.1"/>
</dbReference>
<dbReference type="RefSeq" id="YP_177641.1">
    <property type="nucleotide sequence ID" value="NC_000962.3"/>
</dbReference>
<dbReference type="SMR" id="P9WI93"/>
<dbReference type="FunCoup" id="P9WI93">
    <property type="interactions" value="112"/>
</dbReference>
<dbReference type="STRING" id="83332.Rv1159A"/>
<dbReference type="iPTMnet" id="P9WI93"/>
<dbReference type="PaxDb" id="83332-Rv1159A"/>
<dbReference type="DNASU" id="3205109"/>
<dbReference type="GeneID" id="3205109"/>
<dbReference type="KEGG" id="mtu:Rv1159A"/>
<dbReference type="KEGG" id="mtv:RVBD_1159A"/>
<dbReference type="TubercuList" id="Rv1159A"/>
<dbReference type="eggNOG" id="COG2154">
    <property type="taxonomic scope" value="Bacteria"/>
</dbReference>
<dbReference type="InParanoid" id="P9WI93"/>
<dbReference type="OrthoDB" id="15077at2"/>
<dbReference type="PhylomeDB" id="P9WI93"/>
<dbReference type="Proteomes" id="UP000001584">
    <property type="component" value="Chromosome"/>
</dbReference>
<dbReference type="GO" id="GO:0008124">
    <property type="term" value="F:4-alpha-hydroxytetrahydrobiopterin dehydratase activity"/>
    <property type="evidence" value="ECO:0000318"/>
    <property type="project" value="GO_Central"/>
</dbReference>
<dbReference type="GO" id="GO:0006729">
    <property type="term" value="P:tetrahydrobiopterin biosynthetic process"/>
    <property type="evidence" value="ECO:0007669"/>
    <property type="project" value="InterPro"/>
</dbReference>
<dbReference type="CDD" id="cd00488">
    <property type="entry name" value="PCD_DCoH"/>
    <property type="match status" value="1"/>
</dbReference>
<dbReference type="Gene3D" id="3.30.1360.20">
    <property type="entry name" value="Transcriptional coactivator/pterin dehydratase"/>
    <property type="match status" value="1"/>
</dbReference>
<dbReference type="HAMAP" id="MF_00434">
    <property type="entry name" value="Pterin_4_alpha"/>
    <property type="match status" value="1"/>
</dbReference>
<dbReference type="InterPro" id="IPR036428">
    <property type="entry name" value="PCD_sf"/>
</dbReference>
<dbReference type="InterPro" id="IPR001533">
    <property type="entry name" value="Pterin_deHydtase"/>
</dbReference>
<dbReference type="NCBIfam" id="NF002017">
    <property type="entry name" value="PRK00823.1-2"/>
    <property type="match status" value="1"/>
</dbReference>
<dbReference type="PANTHER" id="PTHR12599">
    <property type="entry name" value="PTERIN-4-ALPHA-CARBINOLAMINE DEHYDRATASE"/>
    <property type="match status" value="1"/>
</dbReference>
<dbReference type="PANTHER" id="PTHR12599:SF0">
    <property type="entry name" value="PTERIN-4-ALPHA-CARBINOLAMINE DEHYDRATASE"/>
    <property type="match status" value="1"/>
</dbReference>
<dbReference type="Pfam" id="PF01329">
    <property type="entry name" value="Pterin_4a"/>
    <property type="match status" value="1"/>
</dbReference>
<dbReference type="SUPFAM" id="SSF55248">
    <property type="entry name" value="PCD-like"/>
    <property type="match status" value="1"/>
</dbReference>
<sequence>MAVLTDEQVDAALHDLNGWQRAGGVLRRSIKFPTFMAGIDAVRRVAERAEEVNHHPDIDIRWRTVTFALVTHAVGGITENDIAMAHDIDAMFGA</sequence>
<feature type="initiator methionine" description="Removed" evidence="3">
    <location>
        <position position="1"/>
    </location>
</feature>
<feature type="chain" id="PRO_0000063085" description="Putative pterin-4-alpha-carbinolamine dehydratase">
    <location>
        <begin position="2"/>
        <end position="94"/>
    </location>
</feature>
<feature type="modified residue" description="N-acetylalanine" evidence="3">
    <location>
        <position position="2"/>
    </location>
</feature>
<name>PHS_MYCTU</name>
<keyword id="KW-0007">Acetylation</keyword>
<keyword id="KW-0456">Lyase</keyword>
<keyword id="KW-1185">Reference proteome</keyword>
<gene>
    <name evidence="2" type="ordered locus">Rv1159A</name>
</gene>
<evidence type="ECO:0000305" key="1"/>
<evidence type="ECO:0000312" key="2">
    <source>
        <dbReference type="EMBL" id="CCP43915.1"/>
    </source>
</evidence>
<evidence type="ECO:0007744" key="3">
    <source>
    </source>
</evidence>
<organism>
    <name type="scientific">Mycobacterium tuberculosis (strain ATCC 25618 / H37Rv)</name>
    <dbReference type="NCBI Taxonomy" id="83332"/>
    <lineage>
        <taxon>Bacteria</taxon>
        <taxon>Bacillati</taxon>
        <taxon>Actinomycetota</taxon>
        <taxon>Actinomycetes</taxon>
        <taxon>Mycobacteriales</taxon>
        <taxon>Mycobacteriaceae</taxon>
        <taxon>Mycobacterium</taxon>
        <taxon>Mycobacterium tuberculosis complex</taxon>
    </lineage>
</organism>